<proteinExistence type="evidence at transcript level"/>
<protein>
    <recommendedName>
        <fullName>G2/mitotic-specific cyclin-B1</fullName>
    </recommendedName>
</protein>
<keyword id="KW-0007">Acetylation</keyword>
<keyword id="KW-0131">Cell cycle</keyword>
<keyword id="KW-0132">Cell division</keyword>
<keyword id="KW-0195">Cyclin</keyword>
<keyword id="KW-0963">Cytoplasm</keyword>
<keyword id="KW-0206">Cytoskeleton</keyword>
<keyword id="KW-0498">Mitosis</keyword>
<keyword id="KW-0539">Nucleus</keyword>
<keyword id="KW-0597">Phosphoprotein</keyword>
<keyword id="KW-1185">Reference proteome</keyword>
<keyword id="KW-0832">Ubl conjugation</keyword>
<gene>
    <name type="primary">CCNB1</name>
</gene>
<organism>
    <name type="scientific">Bos taurus</name>
    <name type="common">Bovine</name>
    <dbReference type="NCBI Taxonomy" id="9913"/>
    <lineage>
        <taxon>Eukaryota</taxon>
        <taxon>Metazoa</taxon>
        <taxon>Chordata</taxon>
        <taxon>Craniata</taxon>
        <taxon>Vertebrata</taxon>
        <taxon>Euteleostomi</taxon>
        <taxon>Mammalia</taxon>
        <taxon>Eutheria</taxon>
        <taxon>Laurasiatheria</taxon>
        <taxon>Artiodactyla</taxon>
        <taxon>Ruminantia</taxon>
        <taxon>Pecora</taxon>
        <taxon>Bovidae</taxon>
        <taxon>Bovinae</taxon>
        <taxon>Bos</taxon>
    </lineage>
</organism>
<accession>Q1LZG6</accession>
<feature type="chain" id="PRO_0000282330" description="G2/mitotic-specific cyclin-B1">
    <location>
        <begin position="1"/>
        <end position="427"/>
    </location>
</feature>
<feature type="region of interest" description="Disordered" evidence="4">
    <location>
        <begin position="33"/>
        <end position="126"/>
    </location>
</feature>
<feature type="region of interest" description="Interaction with CDK2" evidence="1">
    <location>
        <begin position="163"/>
        <end position="171"/>
    </location>
</feature>
<feature type="region of interest" description="Interaction with CDK2" evidence="1">
    <location>
        <begin position="252"/>
        <end position="255"/>
    </location>
</feature>
<feature type="compositionally biased region" description="Basic and acidic residues" evidence="4">
    <location>
        <begin position="100"/>
        <end position="110"/>
    </location>
</feature>
<feature type="modified residue" description="N6-acetyllysine" evidence="2">
    <location>
        <position position="73"/>
    </location>
</feature>
<feature type="modified residue" description="Phosphoserine; by CDK1" evidence="2">
    <location>
        <position position="120"/>
    </location>
</feature>
<feature type="modified residue" description="Phosphoserine" evidence="2">
    <location>
        <position position="122"/>
    </location>
</feature>
<feature type="modified residue" description="Phosphoserine; by PLK1" evidence="2">
    <location>
        <position position="127"/>
    </location>
</feature>
<feature type="modified residue" description="Phosphoserine" evidence="2">
    <location>
        <position position="141"/>
    </location>
</feature>
<feature type="modified residue" description="Phosphothreonine" evidence="2">
    <location>
        <position position="315"/>
    </location>
</feature>
<reference key="1">
    <citation type="submission" date="2006-05" db="EMBL/GenBank/DDBJ databases">
        <authorList>
            <consortium name="NIH - Mammalian Gene Collection (MGC) project"/>
        </authorList>
    </citation>
    <scope>NUCLEOTIDE SEQUENCE [LARGE SCALE MRNA]</scope>
    <source>
        <strain>Hereford</strain>
        <tissue>Ascending colon</tissue>
    </source>
</reference>
<evidence type="ECO:0000250" key="1"/>
<evidence type="ECO:0000250" key="2">
    <source>
        <dbReference type="UniProtKB" id="P14635"/>
    </source>
</evidence>
<evidence type="ECO:0000250" key="3">
    <source>
        <dbReference type="UniProtKB" id="P24860"/>
    </source>
</evidence>
<evidence type="ECO:0000256" key="4">
    <source>
        <dbReference type="SAM" id="MobiDB-lite"/>
    </source>
</evidence>
<evidence type="ECO:0000305" key="5"/>
<comment type="function">
    <text evidence="1">Essential for the control of the cell cycle at the G2/M (mitosis) transition.</text>
</comment>
<comment type="subunit">
    <text evidence="2 3">Interacts with the CDC2 protein kinase to form a serine/threonine kinase holoenzyme complex also known as maturation promoting factor (MPF). The cyclin subunit imparts substrate specificity to the complex. Binds HEI10. Interacts with catalytically active RALBP1 and CDC2 during mitosis to form an endocytotic complex during interphase. Interacts with CCNF; interaction is required for nuclear localization. Interacts with CDK5RAP3. Interacts with RFPL4A and UBE2A. Interacts with INCA1.</text>
</comment>
<comment type="subcellular location">
    <subcellularLocation>
        <location>Cytoplasm</location>
    </subcellularLocation>
    <subcellularLocation>
        <location>Nucleus</location>
    </subcellularLocation>
    <subcellularLocation>
        <location evidence="1">Cytoplasm</location>
        <location evidence="1">Cytoskeleton</location>
        <location evidence="1">Microtubule organizing center</location>
        <location evidence="1">Centrosome</location>
    </subcellularLocation>
</comment>
<comment type="developmental stage">
    <text>Accumulates steadily during G2 and is abruptly destroyed at mitosis.</text>
</comment>
<comment type="PTM">
    <text evidence="1">Ubiquitinated by the SCF(NIPA) complex during interphase, leading to its destruction. Deubiquitinated by USP22 during G2/M phase (By similarity).</text>
</comment>
<comment type="PTM">
    <text evidence="1">Phosphorylated by PLK1 at Ser-127 on centrosomes during prophase: phosphorylation by PLK1 does not cause nuclear import. Phosphorylation at Ser-141 was also reported to be mediated by PLK1 but Ser-127 seems to be the primary phosphorylation site (By similarity).</text>
</comment>
<comment type="similarity">
    <text evidence="5">Belongs to the cyclin family. Cyclin AB subfamily.</text>
</comment>
<name>CCNB1_BOVIN</name>
<sequence length="427" mass="47658">MALRITRNTKISAENKAKISMAGAKRVPVAAVATSKPGLRPRTALGDIGNKVSEQPQAKLPLKKEAKTLASGKVTAKKVPKPLEKAPVPVPEPQPEPEPEPEHVKEDKLSPEPILVDTPSPSPMETSGCAPAEEYLCQAFSDVILAVSDVDAEDGADPNLCSEYVKDIYAYLRQLEEEQAVKPKYLMGREVTGNMRAILIDWLVQVQIKFRLLQETMYMTVSIIDRFMQDTYVPKKMLQLVGVTAMFVASKYEEMYPPEIGDFAFVTDNTYTKFQIRQMEMKILRALNFSLGRPLPLHFLRRASKIGEVDVELHTLAKYLMELTMLDYDMVHFPPSQIAAGAFCLALKVLDNGEWTPTLQHYLSYTEESLLVVMQHLAKNVVMVNRGLTKHMTIKNKYATSKHAKISTLAQLNSALVQDLAKAVAKV</sequence>
<dbReference type="EMBL" id="BC116011">
    <property type="protein sequence ID" value="AAI16012.1"/>
    <property type="molecule type" value="mRNA"/>
</dbReference>
<dbReference type="RefSeq" id="NP_001039337.1">
    <property type="nucleotide sequence ID" value="NM_001045872.1"/>
</dbReference>
<dbReference type="SMR" id="Q1LZG6"/>
<dbReference type="FunCoup" id="Q1LZG6">
    <property type="interactions" value="1554"/>
</dbReference>
<dbReference type="STRING" id="9913.ENSBTAP00000025670"/>
<dbReference type="PaxDb" id="9913-ENSBTAP00000025670"/>
<dbReference type="Ensembl" id="ENSBTAT00000025670.6">
    <property type="protein sequence ID" value="ENSBTAP00000025670.5"/>
    <property type="gene ID" value="ENSBTAG00000014239.6"/>
</dbReference>
<dbReference type="GeneID" id="327679"/>
<dbReference type="KEGG" id="bta:327679"/>
<dbReference type="CTD" id="891"/>
<dbReference type="VEuPathDB" id="HostDB:ENSBTAG00000014239"/>
<dbReference type="VGNC" id="VGNC:26958">
    <property type="gene designation" value="CCNB1"/>
</dbReference>
<dbReference type="eggNOG" id="KOG0653">
    <property type="taxonomic scope" value="Eukaryota"/>
</dbReference>
<dbReference type="GeneTree" id="ENSGT00940000154586"/>
<dbReference type="HOGENOM" id="CLU_020695_2_1_1"/>
<dbReference type="InParanoid" id="Q1LZG6"/>
<dbReference type="OMA" id="MATRNHR"/>
<dbReference type="OrthoDB" id="5590282at2759"/>
<dbReference type="TreeFam" id="TF101001"/>
<dbReference type="Reactome" id="R-BTA-174048">
    <property type="pathway name" value="APC/C:Cdc20 mediated degradation of Cyclin B"/>
</dbReference>
<dbReference type="Reactome" id="R-BTA-176408">
    <property type="pathway name" value="Regulation of APC/C activators between G1/S and early anaphase"/>
</dbReference>
<dbReference type="Reactome" id="R-BTA-176412">
    <property type="pathway name" value="Phosphorylation of the APC/C"/>
</dbReference>
<dbReference type="Reactome" id="R-BTA-176417">
    <property type="pathway name" value="Phosphorylation of Emi1"/>
</dbReference>
<dbReference type="Reactome" id="R-BTA-2299718">
    <property type="pathway name" value="Condensation of Prophase Chromosomes"/>
</dbReference>
<dbReference type="Reactome" id="R-BTA-2500257">
    <property type="pathway name" value="Resolution of Sister Chromatid Cohesion"/>
</dbReference>
<dbReference type="Reactome" id="R-BTA-2565942">
    <property type="pathway name" value="Regulation of PLK1 Activity at G2/M Transition"/>
</dbReference>
<dbReference type="Reactome" id="R-BTA-2980767">
    <property type="pathway name" value="Activation of NIMA Kinases NEK9, NEK6, NEK7"/>
</dbReference>
<dbReference type="Reactome" id="R-BTA-2995383">
    <property type="pathway name" value="Initiation of Nuclear Envelope (NE) Reformation"/>
</dbReference>
<dbReference type="Reactome" id="R-BTA-3301854">
    <property type="pathway name" value="Nuclear Pore Complex (NPC) Disassembly"/>
</dbReference>
<dbReference type="Reactome" id="R-BTA-4419969">
    <property type="pathway name" value="Depolymerization of the Nuclear Lamina"/>
</dbReference>
<dbReference type="Reactome" id="R-BTA-6804114">
    <property type="pathway name" value="TP53 Regulates Transcription of Genes Involved in G2 Cell Cycle Arrest"/>
</dbReference>
<dbReference type="Reactome" id="R-BTA-68875">
    <property type="pathway name" value="Mitotic Prophase"/>
</dbReference>
<dbReference type="Reactome" id="R-BTA-69273">
    <property type="pathway name" value="Cyclin A/B1/B2 associated events during G2/M transition"/>
</dbReference>
<dbReference type="Reactome" id="R-BTA-69478">
    <property type="pathway name" value="G2/M DNA replication checkpoint"/>
</dbReference>
<dbReference type="Reactome" id="R-BTA-75035">
    <property type="pathway name" value="Chk1/Chk2(Cds1) mediated inactivation of Cyclin B:Cdk1 complex"/>
</dbReference>
<dbReference type="Reactome" id="R-BTA-8852276">
    <property type="pathway name" value="The role of GTSE1 in G2/M progression after G2 checkpoint"/>
</dbReference>
<dbReference type="Reactome" id="R-BTA-8878166">
    <property type="pathway name" value="Transcriptional regulation by RUNX2"/>
</dbReference>
<dbReference type="Proteomes" id="UP000009136">
    <property type="component" value="Chromosome 20"/>
</dbReference>
<dbReference type="Bgee" id="ENSBTAG00000014239">
    <property type="expression patterns" value="Expressed in oocyte and 95 other cell types or tissues"/>
</dbReference>
<dbReference type="GO" id="GO:0005813">
    <property type="term" value="C:centrosome"/>
    <property type="evidence" value="ECO:0000250"/>
    <property type="project" value="UniProtKB"/>
</dbReference>
<dbReference type="GO" id="GO:0097125">
    <property type="term" value="C:cyclin B1-CDK1 complex"/>
    <property type="evidence" value="ECO:0000318"/>
    <property type="project" value="GO_Central"/>
</dbReference>
<dbReference type="GO" id="GO:0005737">
    <property type="term" value="C:cytoplasm"/>
    <property type="evidence" value="ECO:0000250"/>
    <property type="project" value="UniProtKB"/>
</dbReference>
<dbReference type="GO" id="GO:0005815">
    <property type="term" value="C:microtubule organizing center"/>
    <property type="evidence" value="ECO:0000318"/>
    <property type="project" value="GO_Central"/>
</dbReference>
<dbReference type="GO" id="GO:0005634">
    <property type="term" value="C:nucleus"/>
    <property type="evidence" value="ECO:0000250"/>
    <property type="project" value="UniProtKB"/>
</dbReference>
<dbReference type="GO" id="GO:0016538">
    <property type="term" value="F:cyclin-dependent protein serine/threonine kinase regulator activity"/>
    <property type="evidence" value="ECO:0000318"/>
    <property type="project" value="GO_Central"/>
</dbReference>
<dbReference type="GO" id="GO:0051301">
    <property type="term" value="P:cell division"/>
    <property type="evidence" value="ECO:0007669"/>
    <property type="project" value="UniProtKB-KW"/>
</dbReference>
<dbReference type="GO" id="GO:0000082">
    <property type="term" value="P:G1/S transition of mitotic cell cycle"/>
    <property type="evidence" value="ECO:0000318"/>
    <property type="project" value="GO_Central"/>
</dbReference>
<dbReference type="GO" id="GO:0007080">
    <property type="term" value="P:mitotic metaphase chromosome alignment"/>
    <property type="evidence" value="ECO:0000318"/>
    <property type="project" value="GO_Central"/>
</dbReference>
<dbReference type="CDD" id="cd20565">
    <property type="entry name" value="CYCLIN_CCNB1_rpt1"/>
    <property type="match status" value="1"/>
</dbReference>
<dbReference type="FunFam" id="1.10.472.10:FF:000027">
    <property type="entry name" value="G2/mitotic-specific cyclin-B1"/>
    <property type="match status" value="1"/>
</dbReference>
<dbReference type="Gene3D" id="1.10.472.10">
    <property type="entry name" value="Cyclin-like"/>
    <property type="match status" value="2"/>
</dbReference>
<dbReference type="InterPro" id="IPR048026">
    <property type="entry name" value="CCNB1_first_cyclin-box"/>
</dbReference>
<dbReference type="InterPro" id="IPR039361">
    <property type="entry name" value="Cyclin"/>
</dbReference>
<dbReference type="InterPro" id="IPR013763">
    <property type="entry name" value="Cyclin-like_dom"/>
</dbReference>
<dbReference type="InterPro" id="IPR036915">
    <property type="entry name" value="Cyclin-like_sf"/>
</dbReference>
<dbReference type="InterPro" id="IPR046965">
    <property type="entry name" value="Cyclin_A/B-like"/>
</dbReference>
<dbReference type="InterPro" id="IPR004367">
    <property type="entry name" value="Cyclin_C-dom"/>
</dbReference>
<dbReference type="InterPro" id="IPR006671">
    <property type="entry name" value="Cyclin_N"/>
</dbReference>
<dbReference type="InterPro" id="IPR048258">
    <property type="entry name" value="Cyclins_cyclin-box"/>
</dbReference>
<dbReference type="PANTHER" id="PTHR10177">
    <property type="entry name" value="CYCLINS"/>
    <property type="match status" value="1"/>
</dbReference>
<dbReference type="Pfam" id="PF02984">
    <property type="entry name" value="Cyclin_C"/>
    <property type="match status" value="1"/>
</dbReference>
<dbReference type="Pfam" id="PF00134">
    <property type="entry name" value="Cyclin_N"/>
    <property type="match status" value="1"/>
</dbReference>
<dbReference type="PIRSF" id="PIRSF001771">
    <property type="entry name" value="Cyclin_A_B_D_E"/>
    <property type="match status" value="1"/>
</dbReference>
<dbReference type="SMART" id="SM00385">
    <property type="entry name" value="CYCLIN"/>
    <property type="match status" value="2"/>
</dbReference>
<dbReference type="SMART" id="SM01332">
    <property type="entry name" value="Cyclin_C"/>
    <property type="match status" value="1"/>
</dbReference>
<dbReference type="SUPFAM" id="SSF47954">
    <property type="entry name" value="Cyclin-like"/>
    <property type="match status" value="2"/>
</dbReference>
<dbReference type="PROSITE" id="PS00292">
    <property type="entry name" value="CYCLINS"/>
    <property type="match status" value="1"/>
</dbReference>